<organism>
    <name type="scientific">Thermoplasma acidophilum (strain ATCC 25905 / DSM 1728 / JCM 9062 / NBRC 15155 / AMRC-C165)</name>
    <dbReference type="NCBI Taxonomy" id="273075"/>
    <lineage>
        <taxon>Archaea</taxon>
        <taxon>Methanobacteriati</taxon>
        <taxon>Thermoplasmatota</taxon>
        <taxon>Thermoplasmata</taxon>
        <taxon>Thermoplasmatales</taxon>
        <taxon>Thermoplasmataceae</taxon>
        <taxon>Thermoplasma</taxon>
    </lineage>
</organism>
<sequence length="791" mass="91400">MDIDVNQMEEKWIRYWDEKDVYRFEPADRDKVFAIDTPPPTVSGKMHMGHSFSYPHIDFIARYKRMRGYHVFFPWGFDDNGLPTERYVEKETGIKPSDSNVEEFIRLCKEISESSEKSLLEGWKRIGMSCYFKDYYVTSSPESIRISQSMFLDLVRKGRVYRDLAPSIRCPTCKTSISQIEMKDQEMHTKLVYINFSVGDRPLTIATTRPEMLGSCVAVFVNPDDARYRDLIGKEATVPIFGNHVRIMADASVDMNFGTGAEMVCTFGDQNDLDLWKKYNLPLKISIDKDGRMTEEAGPLKGLSISDARKKIVEILREGGHVVKEESIKHSVNTHERCGTPIEIFIEKQWFIKYLDLKDAFIENGRKIEWTPEYMRVRYENWVNGLKWDWLISRQRYYGVPFPVWYCADCGNTVYADESELPVDPRIQKPSKKCDRCGSTNLVPERDVMDTWATSSLTPRIALTHFGLFDKYYPEDLRGQGHDIISFWAFTTIARSKIHDDRIPWFRIMISGNVYDMYGEKMSKSKGNIVDIYSMIDKYGADALRFWASTVSQGDDIRIKDQDFTRGRRTVIKMYNAKKLIDILKGDRKIRLFEDVKHPVNRWILTEDSRIMETITTHMDNYEVSKARTALDTFFWNVFCDNYLEMIKPIIQKASAAGDYDTVDETVYTASKVMLDVAKAYAPIMPFIAEEIYQTIDFPGRKISIHVDSWPDEKRRYSDANEEVSYIVSVIDAIRSAKSAAKVSVGTRVKVASVKGRKDLIEKYRDLLSGMLRIDSMEIADGDAVDATVFP</sequence>
<dbReference type="EC" id="6.1.1.9" evidence="1"/>
<dbReference type="EMBL" id="AL445063">
    <property type="protein sequence ID" value="CAC11189.1"/>
    <property type="molecule type" value="Genomic_DNA"/>
</dbReference>
<dbReference type="RefSeq" id="WP_010900468.1">
    <property type="nucleotide sequence ID" value="NC_002578.1"/>
</dbReference>
<dbReference type="SMR" id="Q9HM29"/>
<dbReference type="FunCoup" id="Q9HM29">
    <property type="interactions" value="142"/>
</dbReference>
<dbReference type="STRING" id="273075.gene:9571256"/>
<dbReference type="PaxDb" id="273075-Ta0040"/>
<dbReference type="EnsemblBacteria" id="CAC11189">
    <property type="protein sequence ID" value="CAC11189"/>
    <property type="gene ID" value="CAC11189"/>
</dbReference>
<dbReference type="KEGG" id="tac:Ta0040"/>
<dbReference type="eggNOG" id="arCOG00808">
    <property type="taxonomic scope" value="Archaea"/>
</dbReference>
<dbReference type="HOGENOM" id="CLU_001493_0_2_2"/>
<dbReference type="InParanoid" id="Q9HM29"/>
<dbReference type="OrthoDB" id="23906at2157"/>
<dbReference type="Proteomes" id="UP000001024">
    <property type="component" value="Chromosome"/>
</dbReference>
<dbReference type="GO" id="GO:0005829">
    <property type="term" value="C:cytosol"/>
    <property type="evidence" value="ECO:0007669"/>
    <property type="project" value="TreeGrafter"/>
</dbReference>
<dbReference type="GO" id="GO:0002161">
    <property type="term" value="F:aminoacyl-tRNA deacylase activity"/>
    <property type="evidence" value="ECO:0007669"/>
    <property type="project" value="InterPro"/>
</dbReference>
<dbReference type="GO" id="GO:0005524">
    <property type="term" value="F:ATP binding"/>
    <property type="evidence" value="ECO:0007669"/>
    <property type="project" value="UniProtKB-UniRule"/>
</dbReference>
<dbReference type="GO" id="GO:0004832">
    <property type="term" value="F:valine-tRNA ligase activity"/>
    <property type="evidence" value="ECO:0007669"/>
    <property type="project" value="UniProtKB-UniRule"/>
</dbReference>
<dbReference type="GO" id="GO:0006438">
    <property type="term" value="P:valyl-tRNA aminoacylation"/>
    <property type="evidence" value="ECO:0007669"/>
    <property type="project" value="UniProtKB-UniRule"/>
</dbReference>
<dbReference type="CDD" id="cd07962">
    <property type="entry name" value="Anticodon_Ia_Val"/>
    <property type="match status" value="1"/>
</dbReference>
<dbReference type="CDD" id="cd00817">
    <property type="entry name" value="ValRS_core"/>
    <property type="match status" value="1"/>
</dbReference>
<dbReference type="FunFam" id="3.40.50.620:FF:000192">
    <property type="entry name" value="Valine--tRNA ligase"/>
    <property type="match status" value="1"/>
</dbReference>
<dbReference type="Gene3D" id="3.40.50.620">
    <property type="entry name" value="HUPs"/>
    <property type="match status" value="2"/>
</dbReference>
<dbReference type="Gene3D" id="1.10.730.10">
    <property type="entry name" value="Isoleucyl-tRNA Synthetase, Domain 1"/>
    <property type="match status" value="1"/>
</dbReference>
<dbReference type="Gene3D" id="3.90.740.10">
    <property type="entry name" value="Valyl/Leucyl/Isoleucyl-tRNA synthetase, editing domain"/>
    <property type="match status" value="1"/>
</dbReference>
<dbReference type="HAMAP" id="MF_02005">
    <property type="entry name" value="Val_tRNA_synth_type2"/>
    <property type="match status" value="1"/>
</dbReference>
<dbReference type="InterPro" id="IPR001412">
    <property type="entry name" value="aa-tRNA-synth_I_CS"/>
</dbReference>
<dbReference type="InterPro" id="IPR002300">
    <property type="entry name" value="aa-tRNA-synth_Ia"/>
</dbReference>
<dbReference type="InterPro" id="IPR033705">
    <property type="entry name" value="Anticodon_Ia_Val"/>
</dbReference>
<dbReference type="InterPro" id="IPR013155">
    <property type="entry name" value="M/V/L/I-tRNA-synth_anticd-bd"/>
</dbReference>
<dbReference type="InterPro" id="IPR014729">
    <property type="entry name" value="Rossmann-like_a/b/a_fold"/>
</dbReference>
<dbReference type="InterPro" id="IPR009080">
    <property type="entry name" value="tRNAsynth_Ia_anticodon-bd"/>
</dbReference>
<dbReference type="InterPro" id="IPR009008">
    <property type="entry name" value="Val/Leu/Ile-tRNA-synth_edit"/>
</dbReference>
<dbReference type="InterPro" id="IPR022874">
    <property type="entry name" value="Valine-tRNA_ligase_type_2"/>
</dbReference>
<dbReference type="InterPro" id="IPR002303">
    <property type="entry name" value="Valyl-tRNA_ligase"/>
</dbReference>
<dbReference type="NCBIfam" id="NF009687">
    <property type="entry name" value="PRK13208.1"/>
    <property type="match status" value="1"/>
</dbReference>
<dbReference type="NCBIfam" id="TIGR00422">
    <property type="entry name" value="valS"/>
    <property type="match status" value="1"/>
</dbReference>
<dbReference type="PANTHER" id="PTHR11946:SF93">
    <property type="entry name" value="VALINE--TRNA LIGASE, CHLOROPLASTIC_MITOCHONDRIAL 2"/>
    <property type="match status" value="1"/>
</dbReference>
<dbReference type="PANTHER" id="PTHR11946">
    <property type="entry name" value="VALYL-TRNA SYNTHETASES"/>
    <property type="match status" value="1"/>
</dbReference>
<dbReference type="Pfam" id="PF08264">
    <property type="entry name" value="Anticodon_1"/>
    <property type="match status" value="1"/>
</dbReference>
<dbReference type="Pfam" id="PF00133">
    <property type="entry name" value="tRNA-synt_1"/>
    <property type="match status" value="1"/>
</dbReference>
<dbReference type="PRINTS" id="PR00986">
    <property type="entry name" value="TRNASYNTHVAL"/>
</dbReference>
<dbReference type="SUPFAM" id="SSF47323">
    <property type="entry name" value="Anticodon-binding domain of a subclass of class I aminoacyl-tRNA synthetases"/>
    <property type="match status" value="1"/>
</dbReference>
<dbReference type="SUPFAM" id="SSF52374">
    <property type="entry name" value="Nucleotidylyl transferase"/>
    <property type="match status" value="1"/>
</dbReference>
<dbReference type="SUPFAM" id="SSF50677">
    <property type="entry name" value="ValRS/IleRS/LeuRS editing domain"/>
    <property type="match status" value="1"/>
</dbReference>
<dbReference type="PROSITE" id="PS00178">
    <property type="entry name" value="AA_TRNA_LIGASE_I"/>
    <property type="match status" value="1"/>
</dbReference>
<keyword id="KW-0030">Aminoacyl-tRNA synthetase</keyword>
<keyword id="KW-0067">ATP-binding</keyword>
<keyword id="KW-0963">Cytoplasm</keyword>
<keyword id="KW-0436">Ligase</keyword>
<keyword id="KW-0547">Nucleotide-binding</keyword>
<keyword id="KW-0648">Protein biosynthesis</keyword>
<keyword id="KW-1185">Reference proteome</keyword>
<protein>
    <recommendedName>
        <fullName evidence="1">Valine--tRNA ligase</fullName>
        <ecNumber evidence="1">6.1.1.9</ecNumber>
    </recommendedName>
    <alternativeName>
        <fullName evidence="1">Valyl-tRNA synthetase</fullName>
        <shortName evidence="1">ValRS</shortName>
    </alternativeName>
</protein>
<comment type="function">
    <text evidence="1">Catalyzes the attachment of valine to tRNA(Val). As ValRS can inadvertently accommodate and process structurally similar amino acids such as threonine, to avoid such errors, it has a 'posttransfer' editing activity that hydrolyzes mischarged Thr-tRNA(Val) in a tRNA-dependent manner.</text>
</comment>
<comment type="catalytic activity">
    <reaction evidence="1">
        <text>tRNA(Val) + L-valine + ATP = L-valyl-tRNA(Val) + AMP + diphosphate</text>
        <dbReference type="Rhea" id="RHEA:10704"/>
        <dbReference type="Rhea" id="RHEA-COMP:9672"/>
        <dbReference type="Rhea" id="RHEA-COMP:9708"/>
        <dbReference type="ChEBI" id="CHEBI:30616"/>
        <dbReference type="ChEBI" id="CHEBI:33019"/>
        <dbReference type="ChEBI" id="CHEBI:57762"/>
        <dbReference type="ChEBI" id="CHEBI:78442"/>
        <dbReference type="ChEBI" id="CHEBI:78537"/>
        <dbReference type="ChEBI" id="CHEBI:456215"/>
        <dbReference type="EC" id="6.1.1.9"/>
    </reaction>
</comment>
<comment type="subcellular location">
    <subcellularLocation>
        <location evidence="1">Cytoplasm</location>
    </subcellularLocation>
</comment>
<comment type="domain">
    <text evidence="1">ValRS has two distinct active sites: one for aminoacylation and one for editing. The misactivated threonine is translocated from the active site to the editing site.</text>
</comment>
<comment type="similarity">
    <text evidence="1">Belongs to the class-I aminoacyl-tRNA synthetase family. ValS type 2 subfamily.</text>
</comment>
<feature type="chain" id="PRO_0000224637" description="Valine--tRNA ligase">
    <location>
        <begin position="1"/>
        <end position="791"/>
    </location>
</feature>
<feature type="short sequence motif" description="'HIGH' region">
    <location>
        <begin position="40"/>
        <end position="50"/>
    </location>
</feature>
<feature type="short sequence motif" description="'KMSKS' region">
    <location>
        <begin position="521"/>
        <end position="525"/>
    </location>
</feature>
<feature type="binding site" evidence="1">
    <location>
        <position position="524"/>
    </location>
    <ligand>
        <name>ATP</name>
        <dbReference type="ChEBI" id="CHEBI:30616"/>
    </ligand>
</feature>
<accession>Q9HM29</accession>
<evidence type="ECO:0000255" key="1">
    <source>
        <dbReference type="HAMAP-Rule" id="MF_02005"/>
    </source>
</evidence>
<reference key="1">
    <citation type="journal article" date="2000" name="Nature">
        <title>The genome sequence of the thermoacidophilic scavenger Thermoplasma acidophilum.</title>
        <authorList>
            <person name="Ruepp A."/>
            <person name="Graml W."/>
            <person name="Santos-Martinez M.-L."/>
            <person name="Koretke K.K."/>
            <person name="Volker C."/>
            <person name="Mewes H.-W."/>
            <person name="Frishman D."/>
            <person name="Stocker S."/>
            <person name="Lupas A.N."/>
            <person name="Baumeister W."/>
        </authorList>
    </citation>
    <scope>NUCLEOTIDE SEQUENCE [LARGE SCALE GENOMIC DNA]</scope>
    <source>
        <strain>ATCC 25905 / DSM 1728 / JCM 9062 / NBRC 15155 / AMRC-C165</strain>
    </source>
</reference>
<proteinExistence type="inferred from homology"/>
<gene>
    <name evidence="1" type="primary">valS</name>
    <name type="ordered locus">Ta0040</name>
</gene>
<name>SYV_THEAC</name>